<reference evidence="11" key="1">
    <citation type="journal article" date="2008" name="Chem. Biol.">
        <title>Characterization of the azinomycin B biosynthetic gene cluster revealing a different iterative type I polyketide synthase for naphthoate biosynthesis.</title>
        <authorList>
            <person name="Zhao Q."/>
            <person name="He Q."/>
            <person name="Ding W."/>
            <person name="Tang M."/>
            <person name="Kang Q."/>
            <person name="Yu Y."/>
            <person name="Deng W."/>
            <person name="Zhang Q."/>
            <person name="Fang J."/>
            <person name="Tang G."/>
            <person name="Liu W."/>
        </authorList>
    </citation>
    <scope>NUCLEOTIDE SEQUENCE [GENOMIC DNA]</scope>
    <scope>GENE CLUSTER</scope>
    <source>
        <strain>ATCC 33158 / NBRC 13928 / NRRL 2485</strain>
    </source>
</reference>
<reference key="2">
    <citation type="journal article" date="2016" name="Nucleic Acids Res.">
        <title>Characterization of a novel DNA glycosylase from S. sahachiroi involved in the reduction and repair of azinomycin B induced DNA damage.</title>
        <authorList>
            <person name="Wang S."/>
            <person name="Liu K."/>
            <person name="Xiao L."/>
            <person name="Yang L."/>
            <person name="Li H."/>
            <person name="Zhang F."/>
            <person name="Lei L."/>
            <person name="Li S."/>
            <person name="Feng X."/>
            <person name="Li A."/>
            <person name="He J."/>
        </authorList>
    </citation>
    <scope>FUNCTION AS A GLYCOSYLASE</scope>
    <scope>DNA-BINDING</scope>
    <scope>DISRUPTION PHENOTYPE</scope>
    <source>
        <strain>ATCC 33158 / NBRC 13928 / NRRL 2485</strain>
    </source>
</reference>
<reference key="3">
    <citation type="journal article" date="2020" name="Nucleic Acids Res.">
        <title>Escherichia coli YcaQ is a DNA glycosylase that unhooks DNA interstrand crosslinks.</title>
        <authorList>
            <person name="Bradley N.P."/>
            <person name="Washburn L.A."/>
            <person name="Christov P.P."/>
            <person name="Watanabe C.M.H."/>
            <person name="Eichman B.F."/>
        </authorList>
    </citation>
    <scope>FUNCTION AS A GLYCOSYLASE</scope>
    <scope>BIOPHYSICOCHEMICAL PROPERTIES</scope>
</reference>
<reference evidence="12" key="4">
    <citation type="journal article" date="2017" name="Proc. Natl. Acad. Sci. U.S.A.">
        <title>Structure of a DNA glycosylase that unhooks interstrand cross-links.</title>
        <authorList>
            <person name="Mullins E.A."/>
            <person name="Warren G.M."/>
            <person name="Bradley N.P."/>
            <person name="Eichman B.F."/>
        </authorList>
    </citation>
    <scope>X-RAY CRYSTALLOGRAPHY (2.30 ANGSTROMS)</scope>
    <scope>FUNCTION AS A GLYCOSYLASE</scope>
    <scope>DOMAIN</scope>
    <scope>MUTAGENESIS OF GLN-37; GLN-39; GLU-45 AND GLU-221</scope>
    <source>
        <strain>ATCC 33158 / NBRC 13928 / NRRL 2485</strain>
    </source>
</reference>
<feature type="chain" id="PRO_0000462456" description="Interstrand DNA cross-link repair glycosylase">
    <location>
        <begin position="1"/>
        <end position="371"/>
    </location>
</feature>
<feature type="short sequence motif" description="QXQ; important for activity" evidence="10">
    <location>
        <begin position="37"/>
        <end position="39"/>
    </location>
</feature>
<feature type="mutagenesis site" description="Abrogates d7mG excision." evidence="3">
    <original>Q</original>
    <variation>A</variation>
    <location>
        <position position="37"/>
    </location>
</feature>
<feature type="mutagenesis site" description="Abrogates d7mG excision." evidence="3">
    <original>Q</original>
    <variation>A</variation>
    <location>
        <position position="39"/>
    </location>
</feature>
<feature type="mutagenesis site" description="No effect on base excision activity." evidence="3">
    <original>E</original>
    <variation>A</variation>
    <location>
        <position position="45"/>
    </location>
</feature>
<feature type="mutagenesis site" description="No effect on base excision activity." evidence="3">
    <original>E</original>
    <variation>A</variation>
    <location>
        <position position="221"/>
    </location>
</feature>
<accession>B4XYC8</accession>
<name>ICLRG_STREG</name>
<protein>
    <recommendedName>
        <fullName evidence="8">Interstrand DNA cross-link repair glycosylase</fullName>
        <shortName evidence="8">ICL repair glycosylase</shortName>
        <ecNumber evidence="2 3 4">3.2.2.-</ecNumber>
    </recommendedName>
    <alternativeName>
        <fullName evidence="6">Azinomycin resistance determinant</fullName>
    </alternativeName>
    <alternativeName>
        <fullName evidence="6">DNA glycosylase</fullName>
    </alternativeName>
</protein>
<evidence type="ECO:0000269" key="1">
    <source>
    </source>
</evidence>
<evidence type="ECO:0000269" key="2">
    <source>
    </source>
</evidence>
<evidence type="ECO:0000269" key="3">
    <source>
    </source>
</evidence>
<evidence type="ECO:0000269" key="4">
    <source>
    </source>
</evidence>
<evidence type="ECO:0000303" key="5">
    <source>
    </source>
</evidence>
<evidence type="ECO:0000303" key="6">
    <source>
    </source>
</evidence>
<evidence type="ECO:0000303" key="7">
    <source>
    </source>
</evidence>
<evidence type="ECO:0000303" key="8">
    <source>
    </source>
</evidence>
<evidence type="ECO:0000305" key="9"/>
<evidence type="ECO:0000305" key="10">
    <source>
    </source>
</evidence>
<evidence type="ECO:0000312" key="11">
    <source>
        <dbReference type="EMBL" id="ABY83174.1"/>
    </source>
</evidence>
<evidence type="ECO:0007744" key="12">
    <source>
        <dbReference type="PDB" id="5UUJ"/>
    </source>
</evidence>
<sequence>MKASWRQVFAWRMQRQFLEPRTQPSASDVVGRLCGVQAQVWSVAELNVALRQAAPDRESVNREVADLSLMKTWAMRGTLHLLRPSEAGPYLSLMANTGSWLKPSWTRASGVTPRQVDELTEEVAGILDGVVLTRDELVTRLVADKRFVSMEERLRSGWGSVLKPLAWRGVLCHGPNRGNKITFTLPASQFGADWGKMPEPDEAAPTVIKAYLGAYGPATIETFDRWLSLNSTSKPKLRKWFGDMGDELTEVDVEGRKAFVLTEHAEELAATAPCTGIRLLGGFDQYLLGPGTKDEVVLAPEHRSAVSRAAGWISPVVVKDGRVVGVWEIVDQELVVTPFPDTERLPVKAVEKEAAHVARASGVSRLPVRIV</sequence>
<gene>
    <name evidence="7" type="primary">alkZ</name>
    <name evidence="11" type="synonym">azi36</name>
    <name evidence="5" type="synonym">orf1</name>
</gene>
<proteinExistence type="evidence at protein level"/>
<dbReference type="EC" id="3.2.2.-" evidence="2 3 4"/>
<dbReference type="EMBL" id="EU240558">
    <property type="protein sequence ID" value="ABY83174.1"/>
    <property type="molecule type" value="Genomic_DNA"/>
</dbReference>
<dbReference type="PDB" id="5UUJ">
    <property type="method" value="X-ray"/>
    <property type="resolution" value="2.30 A"/>
    <property type="chains" value="A=1-371"/>
</dbReference>
<dbReference type="PDBsum" id="5UUJ"/>
<dbReference type="SMR" id="B4XYC8"/>
<dbReference type="InterPro" id="IPR009351">
    <property type="entry name" value="AlkZ-like"/>
</dbReference>
<dbReference type="PANTHER" id="PTHR38479">
    <property type="entry name" value="LMO0824 PROTEIN"/>
    <property type="match status" value="1"/>
</dbReference>
<dbReference type="PANTHER" id="PTHR38479:SF2">
    <property type="entry name" value="WINGED HELIX DNA-BINDING DOMAIN-CONTAINING PROTEIN"/>
    <property type="match status" value="1"/>
</dbReference>
<dbReference type="Pfam" id="PF06224">
    <property type="entry name" value="AlkZ-like"/>
    <property type="match status" value="1"/>
</dbReference>
<organism>
    <name type="scientific">Streptomyces sahachiroi</name>
    <dbReference type="NCBI Taxonomy" id="285525"/>
    <lineage>
        <taxon>Bacteria</taxon>
        <taxon>Bacillati</taxon>
        <taxon>Actinomycetota</taxon>
        <taxon>Actinomycetes</taxon>
        <taxon>Kitasatosporales</taxon>
        <taxon>Streptomycetaceae</taxon>
        <taxon>Streptomyces</taxon>
    </lineage>
</organism>
<keyword id="KW-0002">3D-structure</keyword>
<keyword id="KW-0227">DNA damage</keyword>
<keyword id="KW-0234">DNA repair</keyword>
<keyword id="KW-0238">DNA-binding</keyword>
<keyword id="KW-0378">Hydrolase</keyword>
<comment type="function">
    <text evidence="2 3 4">DNA glycosylase involved in the repair of interstrand DNA cross-links (ICLs), which are highly toxic DNA lesions that covalently tether the opposing strands of DNA, thereby inhibiting essential cellular processes such as DNA replication and transcription (PubMed:26400161, PubMed:32409837). Acts by unhooking both sides of the ICLs, forming abasic (AP) sites on both strands (PubMed:26400161, PubMed:32409837). AlkZ specifically repairs DNA damage induced by azinomycin B (AZB), a natural product with potent antibiotic and antitumor activities that interacts covalently with duplex DNA and forms ICLs (PubMed:26400161, PubMed:32409837). AlkZ thus confers self-resistance to azinomycin B, which is produced by S.sahachiroi (PubMed:26400161). It may also protect target sites by protein-DNA interaction (PubMed:26400161). Binds sequence non-specifically to native DNA and structure-specifically to azinomycin B-modified sites, with higher affinity to azinomycin B-modified sites and lower affinity to native DNA duplex (PubMed:26400161). In vitro, also acts on monoadducts and can catalyze the excision of N7-methylguanine (7mGua) from an oligonucleotide containing N7-methyldeoxyguanosine (d7mG) (PubMed:28396405). Is a monofunctional DNA glycosylase that does not have lyase activity (PubMed:28396405).</text>
</comment>
<comment type="biophysicochemical properties">
    <kinetics>
        <text evidence="4">kcat is 0.02 sec(-1) for AZB-ICL unhooking activity.</text>
    </kinetics>
</comment>
<comment type="induction">
    <text evidence="1">The gene is adjacent to the azinomycin B biosynthetic gene cluster.</text>
</comment>
<comment type="domain">
    <text evidence="3">Adopts a unique fold in which three tandem winged helix-turn-helix motifs scaffold a positively charged concave surface perfectly shaped for duplex DNA (PubMed:28396405). The active site contains a QxQ motif and a beta-hairpin essential for base excision activity (PubMed:28396405).</text>
</comment>
<comment type="disruption phenotype">
    <text evidence="2">Essential, it cannot be deleted.</text>
</comment>
<comment type="similarity">
    <text evidence="9">Belongs to the DNA glycosylase AlkZ-like family.</text>
</comment>